<gene>
    <name evidence="7" type="primary">paxt-1</name>
    <name evidence="7" type="ORF">R05D11.6</name>
</gene>
<evidence type="ECO:0000255" key="1">
    <source>
        <dbReference type="PROSITE-ProRule" id="PRU01171"/>
    </source>
</evidence>
<evidence type="ECO:0000256" key="2">
    <source>
        <dbReference type="SAM" id="MobiDB-lite"/>
    </source>
</evidence>
<evidence type="ECO:0000269" key="3">
    <source>
    </source>
</evidence>
<evidence type="ECO:0000269" key="4">
    <source>
    </source>
</evidence>
<evidence type="ECO:0000305" key="5"/>
<evidence type="ECO:0000312" key="6">
    <source>
        <dbReference type="Proteomes" id="UP000001940"/>
    </source>
</evidence>
<evidence type="ECO:0000312" key="7">
    <source>
        <dbReference type="WormBase" id="R05D11.6"/>
    </source>
</evidence>
<evidence type="ECO:0007744" key="8">
    <source>
        <dbReference type="PDB" id="5FIR"/>
    </source>
</evidence>
<evidence type="ECO:0007829" key="9">
    <source>
        <dbReference type="PDB" id="5FIR"/>
    </source>
</evidence>
<proteinExistence type="evidence at protein level"/>
<reference evidence="6" key="1">
    <citation type="journal article" date="1998" name="Science">
        <title>Genome sequence of the nematode C. elegans: a platform for investigating biology.</title>
        <authorList>
            <consortium name="The C. elegans sequencing consortium"/>
        </authorList>
    </citation>
    <scope>NUCLEOTIDE SEQUENCE [LARGE SCALE GENOMIC DNA]</scope>
    <source>
        <strain evidence="6">Bristol N2</strain>
    </source>
</reference>
<reference evidence="5" key="2">
    <citation type="journal article" date="2014" name="Mol. Cell">
        <title>PAXT-1 promotes XRN2 activity by stabilizing it through a conserved domain.</title>
        <authorList>
            <person name="Miki T.S."/>
            <person name="Richter H."/>
            <person name="Rueegger S."/>
            <person name="Grosshans H."/>
        </authorList>
    </citation>
    <scope>FUNCTION</scope>
    <scope>INTERACTION WITH XRN-2</scope>
    <scope>SUBCELLULAR LOCATION</scope>
    <scope>DEVELOPMENTAL STAGE</scope>
    <scope>DOMAIN</scope>
    <scope>DISRUPTION PHENOTYPE</scope>
</reference>
<reference evidence="5 8" key="3">
    <citation type="journal article" date="2016" name="Nat. Struct. Mol. Biol.">
        <title>Structural basis and function of XRN2 binding by XTB domains.</title>
        <authorList>
            <person name="Richter H."/>
            <person name="Katic I."/>
            <person name="Gut H."/>
            <person name="Grosshans H."/>
        </authorList>
    </citation>
    <scope>X-RAY CRYSTALLOGRAPHY (2.84 ANGSTROMS) OF 2-75 IN COMPLEX WITH XRN-2</scope>
    <scope>FUNCTION</scope>
    <scope>DOMAIN</scope>
    <scope>DISRUPTION PHENOTYPE</scope>
    <scope>MUTAGENESIS OF CYS-54 AND TYR-56</scope>
</reference>
<dbReference type="EMBL" id="BX284601">
    <property type="protein sequence ID" value="CAA99893.2"/>
    <property type="molecule type" value="Genomic_DNA"/>
</dbReference>
<dbReference type="PIR" id="T23924">
    <property type="entry name" value="T23924"/>
</dbReference>
<dbReference type="RefSeq" id="NP_001379143.1">
    <property type="nucleotide sequence ID" value="NM_001392688.1"/>
</dbReference>
<dbReference type="RefSeq" id="NP_492325.2">
    <property type="nucleotide sequence ID" value="NM_059924.6"/>
</dbReference>
<dbReference type="PDB" id="5FIR">
    <property type="method" value="X-ray"/>
    <property type="resolution" value="2.84 A"/>
    <property type="chains" value="B/D/F/H/J/L=2-75"/>
</dbReference>
<dbReference type="PDBsum" id="5FIR"/>
<dbReference type="SMR" id="Q21738"/>
<dbReference type="ComplexPortal" id="CPX-420">
    <property type="entry name" value="xtbd-paxt-1 complex"/>
</dbReference>
<dbReference type="DIP" id="DIP-61981N"/>
<dbReference type="FunCoup" id="Q21738">
    <property type="interactions" value="337"/>
</dbReference>
<dbReference type="IntAct" id="Q21738">
    <property type="interactions" value="1"/>
</dbReference>
<dbReference type="STRING" id="6239.R05D11.6.1"/>
<dbReference type="PaxDb" id="6239-R05D11.6.1"/>
<dbReference type="PeptideAtlas" id="Q21738"/>
<dbReference type="EnsemblMetazoa" id="R05D11.6.1">
    <property type="protein sequence ID" value="R05D11.6.1"/>
    <property type="gene ID" value="WBGene00011034"/>
</dbReference>
<dbReference type="GeneID" id="187613"/>
<dbReference type="UCSC" id="R05D11.6">
    <property type="organism name" value="c. elegans"/>
</dbReference>
<dbReference type="AGR" id="WB:WBGene00011034"/>
<dbReference type="WormBase" id="R05D11.6">
    <property type="protein sequence ID" value="CE32473"/>
    <property type="gene ID" value="WBGene00011034"/>
    <property type="gene designation" value="paxt-1"/>
</dbReference>
<dbReference type="eggNOG" id="ENOG502S4FT">
    <property type="taxonomic scope" value="Eukaryota"/>
</dbReference>
<dbReference type="GeneTree" id="ENSGT00940000175672"/>
<dbReference type="HOGENOM" id="CLU_051406_0_0_1"/>
<dbReference type="InParanoid" id="Q21738"/>
<dbReference type="OMA" id="WESDDAW"/>
<dbReference type="OrthoDB" id="2359216at2759"/>
<dbReference type="SABIO-RK" id="Q21738"/>
<dbReference type="PRO" id="PR:Q21738"/>
<dbReference type="Proteomes" id="UP000001940">
    <property type="component" value="Chromosome I"/>
</dbReference>
<dbReference type="Bgee" id="WBGene00011034">
    <property type="expression patterns" value="Expressed in germ line (C elegans) and 4 other cell types or tissues"/>
</dbReference>
<dbReference type="GO" id="GO:0005730">
    <property type="term" value="C:nucleolus"/>
    <property type="evidence" value="ECO:0000314"/>
    <property type="project" value="WormBase"/>
</dbReference>
<dbReference type="GO" id="GO:0005654">
    <property type="term" value="C:nucleoplasm"/>
    <property type="evidence" value="ECO:0000314"/>
    <property type="project" value="WormBase"/>
</dbReference>
<dbReference type="GO" id="GO:0005634">
    <property type="term" value="C:nucleus"/>
    <property type="evidence" value="ECO:0000314"/>
    <property type="project" value="WormBase"/>
</dbReference>
<dbReference type="GO" id="GO:0010587">
    <property type="term" value="P:miRNA catabolic process"/>
    <property type="evidence" value="ECO:0000269"/>
    <property type="project" value="ComplexPortal"/>
</dbReference>
<dbReference type="GO" id="GO:0006397">
    <property type="term" value="P:mRNA processing"/>
    <property type="evidence" value="ECO:0007669"/>
    <property type="project" value="UniProtKB-KW"/>
</dbReference>
<dbReference type="GO" id="GO:0060965">
    <property type="term" value="P:negative regulation of miRNA-mediated gene silencing"/>
    <property type="evidence" value="ECO:0000269"/>
    <property type="project" value="ComplexPortal"/>
</dbReference>
<dbReference type="InterPro" id="IPR021859">
    <property type="entry name" value="XTBD"/>
</dbReference>
<dbReference type="PANTHER" id="PTHR48430">
    <property type="entry name" value="PARTNER OF XRN-2 PROTEIN 1"/>
    <property type="match status" value="1"/>
</dbReference>
<dbReference type="PANTHER" id="PTHR48430:SF1">
    <property type="entry name" value="PARTNER OF XRN-2 PROTEIN 1"/>
    <property type="match status" value="1"/>
</dbReference>
<dbReference type="Pfam" id="PF24799">
    <property type="entry name" value="Paxt-1_C"/>
    <property type="match status" value="1"/>
</dbReference>
<dbReference type="Pfam" id="PF11952">
    <property type="entry name" value="XTBD"/>
    <property type="match status" value="1"/>
</dbReference>
<dbReference type="PROSITE" id="PS51827">
    <property type="entry name" value="XTBD"/>
    <property type="match status" value="1"/>
</dbReference>
<comment type="function">
    <text evidence="3 4">Plays a role in maintenance of steady-state concentration and turnover of microRNAs (miRNA) by degradation of mature miRNA in complex with the exoribonuclease xrn-2 (PubMed:26779609). Stabilizes and enhances the accumulation and activity of the exoribonuclease xrn-2, and thus contributes to miRNA turnover (PubMed:24462208, PubMed:26779609).</text>
</comment>
<comment type="subunit">
    <text evidence="3 4">Interacts (via N-terminus) with xrn-2; the interaction is direct.</text>
</comment>
<comment type="interaction">
    <interactant intactId="EBI-11705385">
        <id>Q21738</id>
    </interactant>
    <interactant intactId="EBI-320499">
        <id>Q9U299</id>
        <label>xrn-2</label>
    </interactant>
    <organismsDiffer>false</organismsDiffer>
    <experiments>5</experiments>
</comment>
<comment type="subcellular location">
    <subcellularLocation>
        <location evidence="3">Nucleus</location>
        <location evidence="3">Nucleolus</location>
    </subcellularLocation>
    <subcellularLocation>
        <location evidence="3">Nucleus</location>
        <location evidence="3">Nucleoplasm</location>
    </subcellularLocation>
</comment>
<comment type="developmental stage">
    <text evidence="3">Ubiquitously expressed throughout development.</text>
</comment>
<comment type="domain">
    <text evidence="3 4">XTBD domain is necessary for interaction with xrn-2.</text>
</comment>
<comment type="disruption phenotype">
    <text evidence="3 4">At 26 degrees Celsius 80% of progeny arrest at the L1 stage of larval development (PubMed:24462208). Reduced xrn-2 levels (PubMed:24462208, PubMed:26779609).</text>
</comment>
<name>PAXT1_CAEEL</name>
<accession>Q21738</accession>
<organism evidence="6">
    <name type="scientific">Caenorhabditis elegans</name>
    <dbReference type="NCBI Taxonomy" id="6239"/>
    <lineage>
        <taxon>Eukaryota</taxon>
        <taxon>Metazoa</taxon>
        <taxon>Ecdysozoa</taxon>
        <taxon>Nematoda</taxon>
        <taxon>Chromadorea</taxon>
        <taxon>Rhabditida</taxon>
        <taxon>Rhabditina</taxon>
        <taxon>Rhabditomorpha</taxon>
        <taxon>Rhabditoidea</taxon>
        <taxon>Rhabditidae</taxon>
        <taxon>Peloderinae</taxon>
        <taxon>Caenorhabditis</taxon>
    </lineage>
</organism>
<sequence length="335" mass="37494">MGKLEDVEAEKKLWESDDAWELRKAFMLAHYDDYPKIQLQCLSQLFINVTLLGCEYSQTLMQKIRTMGAGIAANKDRTKTGSYVKASAAKKRQAVKTSDLEGASDESKKVKMEKSPSPVARESFDERLGKLKASLAMTPHHLTGEQMMKTATNSCLMKWHVNKINQKIEITIDRYVAFRHTFSQYCVDPRDCAINTLIESILSCDAAVHEESYEIRFDGVPVDECYAKSVTRRLAKIKSAVSNGAHTVKGLTTYLDAVNMSMIQNTQKLEGWSQQLDLVTADLLLSSRVLSSTECTKPAMATIANQMSEDVCQLILNDKINVINSMKSHSSLAFQ</sequence>
<feature type="chain" id="PRO_0000437440" description="Partner of xrn-2 protein 1" evidence="5">
    <location>
        <begin position="1"/>
        <end position="335"/>
    </location>
</feature>
<feature type="domain" description="XRN2-binding (XTBD)" evidence="1">
    <location>
        <begin position="7"/>
        <end position="91"/>
    </location>
</feature>
<feature type="region of interest" description="Disordered" evidence="2">
    <location>
        <begin position="95"/>
        <end position="119"/>
    </location>
</feature>
<feature type="compositionally biased region" description="Basic and acidic residues" evidence="2">
    <location>
        <begin position="105"/>
        <end position="114"/>
    </location>
</feature>
<feature type="mutagenesis site" description="Reduced xrn-2 binding." evidence="4">
    <original>C</original>
    <variation>G</variation>
    <location>
        <position position="54"/>
    </location>
</feature>
<feature type="mutagenesis site" description="In xe29; lethal at 26 degrees Celsius at the L1 stage of larval development and abolishes xrn-2 binding." evidence="4">
    <original>Y</original>
    <variation>A</variation>
    <location>
        <position position="56"/>
    </location>
</feature>
<feature type="helix" evidence="9">
    <location>
        <begin position="3"/>
        <end position="8"/>
    </location>
</feature>
<feature type="helix" evidence="9">
    <location>
        <begin position="17"/>
        <end position="30"/>
    </location>
</feature>
<feature type="helix" evidence="9">
    <location>
        <begin position="31"/>
        <end position="33"/>
    </location>
</feature>
<feature type="helix" evidence="9">
    <location>
        <begin position="36"/>
        <end position="50"/>
    </location>
</feature>
<feature type="helix" evidence="9">
    <location>
        <begin position="58"/>
        <end position="68"/>
    </location>
</feature>
<feature type="turn" evidence="9">
    <location>
        <begin position="69"/>
        <end position="72"/>
    </location>
</feature>
<protein>
    <recommendedName>
        <fullName evidence="7">Partner of xrn-2 protein 1</fullName>
    </recommendedName>
</protein>
<keyword id="KW-0002">3D-structure</keyword>
<keyword id="KW-0507">mRNA processing</keyword>
<keyword id="KW-0539">Nucleus</keyword>
<keyword id="KW-1185">Reference proteome</keyword>